<accession>B7KHE4</accession>
<comment type="similarity">
    <text evidence="1">Belongs to the bacterial ribosomal protein bL34 family.</text>
</comment>
<dbReference type="EMBL" id="CP001291">
    <property type="protein sequence ID" value="ACK69353.1"/>
    <property type="molecule type" value="Genomic_DNA"/>
</dbReference>
<dbReference type="RefSeq" id="WP_012598300.1">
    <property type="nucleotide sequence ID" value="NC_011729.1"/>
</dbReference>
<dbReference type="SMR" id="B7KHE4"/>
<dbReference type="STRING" id="65393.PCC7424_0897"/>
<dbReference type="KEGG" id="cyc:PCC7424_0897"/>
<dbReference type="eggNOG" id="COG0230">
    <property type="taxonomic scope" value="Bacteria"/>
</dbReference>
<dbReference type="HOGENOM" id="CLU_129938_2_1_3"/>
<dbReference type="OrthoDB" id="9804164at2"/>
<dbReference type="Proteomes" id="UP000002384">
    <property type="component" value="Chromosome"/>
</dbReference>
<dbReference type="GO" id="GO:1990904">
    <property type="term" value="C:ribonucleoprotein complex"/>
    <property type="evidence" value="ECO:0007669"/>
    <property type="project" value="UniProtKB-KW"/>
</dbReference>
<dbReference type="GO" id="GO:0005840">
    <property type="term" value="C:ribosome"/>
    <property type="evidence" value="ECO:0007669"/>
    <property type="project" value="UniProtKB-KW"/>
</dbReference>
<dbReference type="GO" id="GO:0003735">
    <property type="term" value="F:structural constituent of ribosome"/>
    <property type="evidence" value="ECO:0007669"/>
    <property type="project" value="InterPro"/>
</dbReference>
<dbReference type="GO" id="GO:0006412">
    <property type="term" value="P:translation"/>
    <property type="evidence" value="ECO:0007669"/>
    <property type="project" value="UniProtKB-UniRule"/>
</dbReference>
<dbReference type="Gene3D" id="1.10.287.3980">
    <property type="match status" value="1"/>
</dbReference>
<dbReference type="HAMAP" id="MF_00391">
    <property type="entry name" value="Ribosomal_bL34"/>
    <property type="match status" value="1"/>
</dbReference>
<dbReference type="InterPro" id="IPR000271">
    <property type="entry name" value="Ribosomal_bL34"/>
</dbReference>
<dbReference type="NCBIfam" id="TIGR01030">
    <property type="entry name" value="rpmH_bact"/>
    <property type="match status" value="1"/>
</dbReference>
<dbReference type="Pfam" id="PF00468">
    <property type="entry name" value="Ribosomal_L34"/>
    <property type="match status" value="1"/>
</dbReference>
<organism>
    <name type="scientific">Gloeothece citriformis (strain PCC 7424)</name>
    <name type="common">Cyanothece sp. (strain PCC 7424)</name>
    <dbReference type="NCBI Taxonomy" id="65393"/>
    <lineage>
        <taxon>Bacteria</taxon>
        <taxon>Bacillati</taxon>
        <taxon>Cyanobacteriota</taxon>
        <taxon>Cyanophyceae</taxon>
        <taxon>Oscillatoriophycideae</taxon>
        <taxon>Chroococcales</taxon>
        <taxon>Aphanothecaceae</taxon>
        <taxon>Gloeothece</taxon>
        <taxon>Gloeothece citriformis</taxon>
    </lineage>
</organism>
<keyword id="KW-1185">Reference proteome</keyword>
<keyword id="KW-0687">Ribonucleoprotein</keyword>
<keyword id="KW-0689">Ribosomal protein</keyword>
<feature type="chain" id="PRO_1000196032" description="Large ribosomal subunit protein bL34">
    <location>
        <begin position="1"/>
        <end position="48"/>
    </location>
</feature>
<name>RL34_GLOC7</name>
<proteinExistence type="inferred from homology"/>
<gene>
    <name evidence="1" type="primary">rpmH</name>
    <name evidence="1" type="synonym">rpl34</name>
    <name type="ordered locus">PCC7424_0897</name>
</gene>
<sequence>MTRRTLEGTSRKRRRVSGFRTRMRTINGRKVIQARRQKGRHKLSVSEG</sequence>
<evidence type="ECO:0000255" key="1">
    <source>
        <dbReference type="HAMAP-Rule" id="MF_00391"/>
    </source>
</evidence>
<evidence type="ECO:0000305" key="2"/>
<protein>
    <recommendedName>
        <fullName evidence="1">Large ribosomal subunit protein bL34</fullName>
    </recommendedName>
    <alternativeName>
        <fullName evidence="2">50S ribosomal protein L34</fullName>
    </alternativeName>
</protein>
<reference key="1">
    <citation type="journal article" date="2011" name="MBio">
        <title>Novel metabolic attributes of the genus Cyanothece, comprising a group of unicellular nitrogen-fixing Cyanobacteria.</title>
        <authorList>
            <person name="Bandyopadhyay A."/>
            <person name="Elvitigala T."/>
            <person name="Welsh E."/>
            <person name="Stockel J."/>
            <person name="Liberton M."/>
            <person name="Min H."/>
            <person name="Sherman L.A."/>
            <person name="Pakrasi H.B."/>
        </authorList>
    </citation>
    <scope>NUCLEOTIDE SEQUENCE [LARGE SCALE GENOMIC DNA]</scope>
    <source>
        <strain>PCC 7424</strain>
    </source>
</reference>